<organism>
    <name type="scientific">Cupriavidus necator (strain ATCC 17699 / DSM 428 / KCTC 22496 / NCIMB 10442 / H16 / Stanier 337)</name>
    <name type="common">Ralstonia eutropha</name>
    <dbReference type="NCBI Taxonomy" id="381666"/>
    <lineage>
        <taxon>Bacteria</taxon>
        <taxon>Pseudomonadati</taxon>
        <taxon>Pseudomonadota</taxon>
        <taxon>Betaproteobacteria</taxon>
        <taxon>Burkholderiales</taxon>
        <taxon>Burkholderiaceae</taxon>
        <taxon>Cupriavidus</taxon>
    </lineage>
</organism>
<evidence type="ECO:0000255" key="1">
    <source>
        <dbReference type="HAMAP-Rule" id="MF_01227"/>
    </source>
</evidence>
<proteinExistence type="inferred from homology"/>
<comment type="function">
    <text evidence="1">Catalyzes the ATP-dependent amination of UTP to CTP with either L-glutamine or ammonia as the source of nitrogen. Regulates intracellular CTP levels through interactions with the four ribonucleotide triphosphates.</text>
</comment>
<comment type="catalytic activity">
    <reaction evidence="1">
        <text>UTP + L-glutamine + ATP + H2O = CTP + L-glutamate + ADP + phosphate + 2 H(+)</text>
        <dbReference type="Rhea" id="RHEA:26426"/>
        <dbReference type="ChEBI" id="CHEBI:15377"/>
        <dbReference type="ChEBI" id="CHEBI:15378"/>
        <dbReference type="ChEBI" id="CHEBI:29985"/>
        <dbReference type="ChEBI" id="CHEBI:30616"/>
        <dbReference type="ChEBI" id="CHEBI:37563"/>
        <dbReference type="ChEBI" id="CHEBI:43474"/>
        <dbReference type="ChEBI" id="CHEBI:46398"/>
        <dbReference type="ChEBI" id="CHEBI:58359"/>
        <dbReference type="ChEBI" id="CHEBI:456216"/>
        <dbReference type="EC" id="6.3.4.2"/>
    </reaction>
</comment>
<comment type="catalytic activity">
    <reaction evidence="1">
        <text>L-glutamine + H2O = L-glutamate + NH4(+)</text>
        <dbReference type="Rhea" id="RHEA:15889"/>
        <dbReference type="ChEBI" id="CHEBI:15377"/>
        <dbReference type="ChEBI" id="CHEBI:28938"/>
        <dbReference type="ChEBI" id="CHEBI:29985"/>
        <dbReference type="ChEBI" id="CHEBI:58359"/>
    </reaction>
</comment>
<comment type="catalytic activity">
    <reaction evidence="1">
        <text>UTP + NH4(+) + ATP = CTP + ADP + phosphate + 2 H(+)</text>
        <dbReference type="Rhea" id="RHEA:16597"/>
        <dbReference type="ChEBI" id="CHEBI:15378"/>
        <dbReference type="ChEBI" id="CHEBI:28938"/>
        <dbReference type="ChEBI" id="CHEBI:30616"/>
        <dbReference type="ChEBI" id="CHEBI:37563"/>
        <dbReference type="ChEBI" id="CHEBI:43474"/>
        <dbReference type="ChEBI" id="CHEBI:46398"/>
        <dbReference type="ChEBI" id="CHEBI:456216"/>
    </reaction>
</comment>
<comment type="activity regulation">
    <text evidence="1">Allosterically activated by GTP, when glutamine is the substrate; GTP has no effect on the reaction when ammonia is the substrate. The allosteric effector GTP functions by stabilizing the protein conformation that binds the tetrahedral intermediate(s) formed during glutamine hydrolysis. Inhibited by the product CTP, via allosteric rather than competitive inhibition.</text>
</comment>
<comment type="pathway">
    <text evidence="1">Pyrimidine metabolism; CTP biosynthesis via de novo pathway; CTP from UDP: step 2/2.</text>
</comment>
<comment type="subunit">
    <text evidence="1">Homotetramer.</text>
</comment>
<comment type="miscellaneous">
    <text evidence="1">CTPSs have evolved a hybrid strategy for distinguishing between UTP and CTP. The overlapping regions of the product feedback inhibitory and substrate sites recognize a common feature in both compounds, the triphosphate moiety. To differentiate isosteric substrate and product pyrimidine rings, an additional pocket far from the expected kinase/ligase catalytic site, specifically recognizes the cytosine and ribose portions of the product inhibitor.</text>
</comment>
<comment type="similarity">
    <text evidence="1">Belongs to the CTP synthase family.</text>
</comment>
<gene>
    <name evidence="1" type="primary">pyrG</name>
    <name type="ordered locus">H16_A1185</name>
</gene>
<feature type="chain" id="PRO_1000139542" description="CTP synthase">
    <location>
        <begin position="1"/>
        <end position="550"/>
    </location>
</feature>
<feature type="domain" description="Glutamine amidotransferase type-1" evidence="1">
    <location>
        <begin position="295"/>
        <end position="547"/>
    </location>
</feature>
<feature type="region of interest" description="Amidoligase domain" evidence="1">
    <location>
        <begin position="1"/>
        <end position="270"/>
    </location>
</feature>
<feature type="active site" description="Nucleophile; for glutamine hydrolysis" evidence="1">
    <location>
        <position position="383"/>
    </location>
</feature>
<feature type="active site" evidence="1">
    <location>
        <position position="520"/>
    </location>
</feature>
<feature type="active site" evidence="1">
    <location>
        <position position="522"/>
    </location>
</feature>
<feature type="binding site" evidence="1">
    <location>
        <position position="13"/>
    </location>
    <ligand>
        <name>CTP</name>
        <dbReference type="ChEBI" id="CHEBI:37563"/>
        <note>allosteric inhibitor</note>
    </ligand>
</feature>
<feature type="binding site" evidence="1">
    <location>
        <position position="13"/>
    </location>
    <ligand>
        <name>UTP</name>
        <dbReference type="ChEBI" id="CHEBI:46398"/>
    </ligand>
</feature>
<feature type="binding site" evidence="1">
    <location>
        <begin position="14"/>
        <end position="19"/>
    </location>
    <ligand>
        <name>ATP</name>
        <dbReference type="ChEBI" id="CHEBI:30616"/>
    </ligand>
</feature>
<feature type="binding site" evidence="1">
    <location>
        <position position="71"/>
    </location>
    <ligand>
        <name>ATP</name>
        <dbReference type="ChEBI" id="CHEBI:30616"/>
    </ligand>
</feature>
<feature type="binding site" evidence="1">
    <location>
        <position position="71"/>
    </location>
    <ligand>
        <name>Mg(2+)</name>
        <dbReference type="ChEBI" id="CHEBI:18420"/>
    </ligand>
</feature>
<feature type="binding site" evidence="1">
    <location>
        <position position="144"/>
    </location>
    <ligand>
        <name>Mg(2+)</name>
        <dbReference type="ChEBI" id="CHEBI:18420"/>
    </ligand>
</feature>
<feature type="binding site" evidence="1">
    <location>
        <begin position="151"/>
        <end position="153"/>
    </location>
    <ligand>
        <name>CTP</name>
        <dbReference type="ChEBI" id="CHEBI:37563"/>
        <note>allosteric inhibitor</note>
    </ligand>
</feature>
<feature type="binding site" evidence="1">
    <location>
        <begin position="191"/>
        <end position="196"/>
    </location>
    <ligand>
        <name>CTP</name>
        <dbReference type="ChEBI" id="CHEBI:37563"/>
        <note>allosteric inhibitor</note>
    </ligand>
</feature>
<feature type="binding site" evidence="1">
    <location>
        <begin position="191"/>
        <end position="196"/>
    </location>
    <ligand>
        <name>UTP</name>
        <dbReference type="ChEBI" id="CHEBI:46398"/>
    </ligand>
</feature>
<feature type="binding site" evidence="1">
    <location>
        <position position="227"/>
    </location>
    <ligand>
        <name>CTP</name>
        <dbReference type="ChEBI" id="CHEBI:37563"/>
        <note>allosteric inhibitor</note>
    </ligand>
</feature>
<feature type="binding site" evidence="1">
    <location>
        <position position="227"/>
    </location>
    <ligand>
        <name>UTP</name>
        <dbReference type="ChEBI" id="CHEBI:46398"/>
    </ligand>
</feature>
<feature type="binding site" evidence="1">
    <location>
        <position position="356"/>
    </location>
    <ligand>
        <name>L-glutamine</name>
        <dbReference type="ChEBI" id="CHEBI:58359"/>
    </ligand>
</feature>
<feature type="binding site" evidence="1">
    <location>
        <begin position="384"/>
        <end position="387"/>
    </location>
    <ligand>
        <name>L-glutamine</name>
        <dbReference type="ChEBI" id="CHEBI:58359"/>
    </ligand>
</feature>
<feature type="binding site" evidence="1">
    <location>
        <position position="407"/>
    </location>
    <ligand>
        <name>L-glutamine</name>
        <dbReference type="ChEBI" id="CHEBI:58359"/>
    </ligand>
</feature>
<feature type="binding site" evidence="1">
    <location>
        <position position="473"/>
    </location>
    <ligand>
        <name>L-glutamine</name>
        <dbReference type="ChEBI" id="CHEBI:58359"/>
    </ligand>
</feature>
<name>PYRG_CUPNH</name>
<accession>Q0KCE5</accession>
<sequence length="550" mass="60794">MTKFVFVTGGVVSSLGKGIAAASLAAILESRGLKVTLLKLDPYINVDPGTMSPFQHGEVFVTEDGAETDLDLGHYERFVSAKMRKSNNFTTGQIYESVIRKERRGEYLGKTVQVIPHITNEIQAFVERGAAASHDGKADVALVEIGGTVGDIESLPFLEAARQMSLRMGRNHCAFVHLTLVPFIASAGELKTKPTQHSVQKLREIGISPTALLCRADRPIPDDERAKISLFANIPQDAVISVWDADSIYKIPQMLNEQGLDRLICEELRLDPKPADLSMWQKLVNAQENPEHEITIGMVGKYVDLTESYKSLIEALRHAGMHTATRVNIEYIDSEELESGHLEVLAPLDAILVPGGFGKRGTEGKIRAIQYARENKIPYLGICLGMQLAVIEFARHLAGMTDANSTEFNLETEHPVVALITEWVDREGKVEQRSADSDLGGTMRLGAQRVPVKEGTKAATIYGAEVNERHRHRYEVNNHYVPTLEKAGMVISARTPTENLPEMMELPESMHPWFVGVQFHPEFTSTPRDGHPLFKAYVEAALASQQRKGA</sequence>
<keyword id="KW-0067">ATP-binding</keyword>
<keyword id="KW-0315">Glutamine amidotransferase</keyword>
<keyword id="KW-0436">Ligase</keyword>
<keyword id="KW-0460">Magnesium</keyword>
<keyword id="KW-0479">Metal-binding</keyword>
<keyword id="KW-0547">Nucleotide-binding</keyword>
<keyword id="KW-0665">Pyrimidine biosynthesis</keyword>
<keyword id="KW-1185">Reference proteome</keyword>
<protein>
    <recommendedName>
        <fullName evidence="1">CTP synthase</fullName>
        <ecNumber evidence="1">6.3.4.2</ecNumber>
    </recommendedName>
    <alternativeName>
        <fullName evidence="1">Cytidine 5'-triphosphate synthase</fullName>
    </alternativeName>
    <alternativeName>
        <fullName evidence="1">Cytidine triphosphate synthetase</fullName>
        <shortName evidence="1">CTP synthetase</shortName>
        <shortName evidence="1">CTPS</shortName>
    </alternativeName>
    <alternativeName>
        <fullName evidence="1">UTP--ammonia ligase</fullName>
    </alternativeName>
</protein>
<dbReference type="EC" id="6.3.4.2" evidence="1"/>
<dbReference type="EMBL" id="AM260479">
    <property type="protein sequence ID" value="CAJ92326.1"/>
    <property type="molecule type" value="Genomic_DNA"/>
</dbReference>
<dbReference type="RefSeq" id="WP_010808999.1">
    <property type="nucleotide sequence ID" value="NZ_CP039287.1"/>
</dbReference>
<dbReference type="SMR" id="Q0KCE5"/>
<dbReference type="STRING" id="381666.H16_A1185"/>
<dbReference type="MEROPS" id="C26.964"/>
<dbReference type="KEGG" id="reh:H16_A1185"/>
<dbReference type="eggNOG" id="COG0504">
    <property type="taxonomic scope" value="Bacteria"/>
</dbReference>
<dbReference type="HOGENOM" id="CLU_011675_5_0_4"/>
<dbReference type="OrthoDB" id="9801107at2"/>
<dbReference type="UniPathway" id="UPA00159">
    <property type="reaction ID" value="UER00277"/>
</dbReference>
<dbReference type="Proteomes" id="UP000008210">
    <property type="component" value="Chromosome 1"/>
</dbReference>
<dbReference type="GO" id="GO:0005829">
    <property type="term" value="C:cytosol"/>
    <property type="evidence" value="ECO:0007669"/>
    <property type="project" value="TreeGrafter"/>
</dbReference>
<dbReference type="GO" id="GO:0005524">
    <property type="term" value="F:ATP binding"/>
    <property type="evidence" value="ECO:0007669"/>
    <property type="project" value="UniProtKB-KW"/>
</dbReference>
<dbReference type="GO" id="GO:0003883">
    <property type="term" value="F:CTP synthase activity"/>
    <property type="evidence" value="ECO:0007669"/>
    <property type="project" value="UniProtKB-UniRule"/>
</dbReference>
<dbReference type="GO" id="GO:0004359">
    <property type="term" value="F:glutaminase activity"/>
    <property type="evidence" value="ECO:0007669"/>
    <property type="project" value="RHEA"/>
</dbReference>
<dbReference type="GO" id="GO:0042802">
    <property type="term" value="F:identical protein binding"/>
    <property type="evidence" value="ECO:0007669"/>
    <property type="project" value="TreeGrafter"/>
</dbReference>
<dbReference type="GO" id="GO:0046872">
    <property type="term" value="F:metal ion binding"/>
    <property type="evidence" value="ECO:0007669"/>
    <property type="project" value="UniProtKB-KW"/>
</dbReference>
<dbReference type="GO" id="GO:0044210">
    <property type="term" value="P:'de novo' CTP biosynthetic process"/>
    <property type="evidence" value="ECO:0007669"/>
    <property type="project" value="UniProtKB-UniRule"/>
</dbReference>
<dbReference type="GO" id="GO:0019856">
    <property type="term" value="P:pyrimidine nucleobase biosynthetic process"/>
    <property type="evidence" value="ECO:0007669"/>
    <property type="project" value="TreeGrafter"/>
</dbReference>
<dbReference type="CDD" id="cd03113">
    <property type="entry name" value="CTPS_N"/>
    <property type="match status" value="1"/>
</dbReference>
<dbReference type="CDD" id="cd01746">
    <property type="entry name" value="GATase1_CTP_Synthase"/>
    <property type="match status" value="1"/>
</dbReference>
<dbReference type="FunFam" id="3.40.50.300:FF:000009">
    <property type="entry name" value="CTP synthase"/>
    <property type="match status" value="1"/>
</dbReference>
<dbReference type="FunFam" id="3.40.50.880:FF:000002">
    <property type="entry name" value="CTP synthase"/>
    <property type="match status" value="1"/>
</dbReference>
<dbReference type="Gene3D" id="3.40.50.880">
    <property type="match status" value="1"/>
</dbReference>
<dbReference type="Gene3D" id="3.40.50.300">
    <property type="entry name" value="P-loop containing nucleotide triphosphate hydrolases"/>
    <property type="match status" value="1"/>
</dbReference>
<dbReference type="HAMAP" id="MF_01227">
    <property type="entry name" value="PyrG"/>
    <property type="match status" value="1"/>
</dbReference>
<dbReference type="InterPro" id="IPR029062">
    <property type="entry name" value="Class_I_gatase-like"/>
</dbReference>
<dbReference type="InterPro" id="IPR004468">
    <property type="entry name" value="CTP_synthase"/>
</dbReference>
<dbReference type="InterPro" id="IPR017456">
    <property type="entry name" value="CTP_synthase_N"/>
</dbReference>
<dbReference type="InterPro" id="IPR017926">
    <property type="entry name" value="GATASE"/>
</dbReference>
<dbReference type="InterPro" id="IPR033828">
    <property type="entry name" value="GATase1_CTP_Synthase"/>
</dbReference>
<dbReference type="InterPro" id="IPR027417">
    <property type="entry name" value="P-loop_NTPase"/>
</dbReference>
<dbReference type="NCBIfam" id="NF003792">
    <property type="entry name" value="PRK05380.1"/>
    <property type="match status" value="1"/>
</dbReference>
<dbReference type="NCBIfam" id="TIGR00337">
    <property type="entry name" value="PyrG"/>
    <property type="match status" value="1"/>
</dbReference>
<dbReference type="PANTHER" id="PTHR11550">
    <property type="entry name" value="CTP SYNTHASE"/>
    <property type="match status" value="1"/>
</dbReference>
<dbReference type="PANTHER" id="PTHR11550:SF0">
    <property type="entry name" value="CTP SYNTHASE-RELATED"/>
    <property type="match status" value="1"/>
</dbReference>
<dbReference type="Pfam" id="PF06418">
    <property type="entry name" value="CTP_synth_N"/>
    <property type="match status" value="1"/>
</dbReference>
<dbReference type="Pfam" id="PF00117">
    <property type="entry name" value="GATase"/>
    <property type="match status" value="1"/>
</dbReference>
<dbReference type="SUPFAM" id="SSF52317">
    <property type="entry name" value="Class I glutamine amidotransferase-like"/>
    <property type="match status" value="1"/>
</dbReference>
<dbReference type="SUPFAM" id="SSF52540">
    <property type="entry name" value="P-loop containing nucleoside triphosphate hydrolases"/>
    <property type="match status" value="1"/>
</dbReference>
<dbReference type="PROSITE" id="PS51273">
    <property type="entry name" value="GATASE_TYPE_1"/>
    <property type="match status" value="1"/>
</dbReference>
<reference key="1">
    <citation type="journal article" date="2006" name="Nat. Biotechnol.">
        <title>Genome sequence of the bioplastic-producing 'Knallgas' bacterium Ralstonia eutropha H16.</title>
        <authorList>
            <person name="Pohlmann A."/>
            <person name="Fricke W.F."/>
            <person name="Reinecke F."/>
            <person name="Kusian B."/>
            <person name="Liesegang H."/>
            <person name="Cramm R."/>
            <person name="Eitinger T."/>
            <person name="Ewering C."/>
            <person name="Poetter M."/>
            <person name="Schwartz E."/>
            <person name="Strittmatter A."/>
            <person name="Voss I."/>
            <person name="Gottschalk G."/>
            <person name="Steinbuechel A."/>
            <person name="Friedrich B."/>
            <person name="Bowien B."/>
        </authorList>
    </citation>
    <scope>NUCLEOTIDE SEQUENCE [LARGE SCALE GENOMIC DNA]</scope>
    <source>
        <strain>ATCC 17699 / DSM 428 / KCTC 22496 / NCIMB 10442 / H16 / Stanier 337</strain>
    </source>
</reference>